<accession>Q8C160</accession>
<comment type="function">
    <text evidence="1">May play a role in cellular adhesion.</text>
</comment>
<comment type="subcellular location">
    <subcellularLocation>
        <location evidence="4">Membrane</location>
        <topology evidence="4">Single-pass type I membrane protein</topology>
    </subcellularLocation>
</comment>
<comment type="similarity">
    <text evidence="4">Belongs to the mesothelin family.</text>
</comment>
<protein>
    <recommendedName>
        <fullName>Mesothelin-like protein</fullName>
    </recommendedName>
    <alternativeName>
        <fullName>Pre-pro-megakaryocyte-potentiating-factor-like</fullName>
    </alternativeName>
</protein>
<keyword id="KW-0130">Cell adhesion</keyword>
<keyword id="KW-0325">Glycoprotein</keyword>
<keyword id="KW-0472">Membrane</keyword>
<keyword id="KW-1185">Reference proteome</keyword>
<keyword id="KW-0732">Signal</keyword>
<keyword id="KW-0812">Transmembrane</keyword>
<keyword id="KW-1133">Transmembrane helix</keyword>
<evidence type="ECO:0000250" key="1"/>
<evidence type="ECO:0000255" key="2"/>
<evidence type="ECO:0000256" key="3">
    <source>
        <dbReference type="SAM" id="MobiDB-lite"/>
    </source>
</evidence>
<evidence type="ECO:0000305" key="4"/>
<name>MSLNL_MOUSE</name>
<sequence>MSRTLRPSAMGSRVGALASPGLALLLSLTAHCSGPQAKGLPKGGLNASEANTWVRNNTSLLQNFWCLPASQLPREQLSSLIRSLASQRVALKAWQLSCLANLAAQLGLQDDFEFHPPNLLLFYDLSQVGDTNCRAFIHHAAQGDTELLTNLPNQRVALQRTALACLGGPHLQLSASDLWLLGVLVCDMEAAQIVTADPSVLRNLLRCPRLTVMQTAALNTLLASGKTQIGPPGSWNLQGLQALGLLATYISPHLWEKVQEAVGLDFFRSVVAACRAGQLSRHDARRFVDNFLESKATSVSSRPKRRTGRSCVRGNITAATLHDDLFLVHYDCTQLESCLGTRVLRANLDPLLQHPLPAECQRVVKAKLTQIYPHGIPEDQLHLIPSLVYLYSLAEIGQWNITSGDTVMILLASDAALDNQTEAVLQRFLDHNGKVTGALLVAIGGSRLCWMSLKQLQFIQPSEFRLAGAPDISPCPQSRKDALFVKAHEVFRNTSNVGEYYYLIRPYLGGAPLEELQYLAQANISMDIDTFTNLNPLTLKSMGVDSVRNLLGQNLGDLRKARNHPNVILWMHSHNMTDLSDMGLYTSPTQAYVANRPPNTAYPPSSLIHSLDPPGNDGVSHTSGSPPVHLGYLSLAVALPSSLLWLLLCQLPSGQMATAHRTLGPMALAQGSWTPEHQIPEKRSC</sequence>
<reference key="1">
    <citation type="journal article" date="2005" name="Science">
        <title>The transcriptional landscape of the mammalian genome.</title>
        <authorList>
            <person name="Carninci P."/>
            <person name="Kasukawa T."/>
            <person name="Katayama S."/>
            <person name="Gough J."/>
            <person name="Frith M.C."/>
            <person name="Maeda N."/>
            <person name="Oyama R."/>
            <person name="Ravasi T."/>
            <person name="Lenhard B."/>
            <person name="Wells C."/>
            <person name="Kodzius R."/>
            <person name="Shimokawa K."/>
            <person name="Bajic V.B."/>
            <person name="Brenner S.E."/>
            <person name="Batalov S."/>
            <person name="Forrest A.R."/>
            <person name="Zavolan M."/>
            <person name="Davis M.J."/>
            <person name="Wilming L.G."/>
            <person name="Aidinis V."/>
            <person name="Allen J.E."/>
            <person name="Ambesi-Impiombato A."/>
            <person name="Apweiler R."/>
            <person name="Aturaliya R.N."/>
            <person name="Bailey T.L."/>
            <person name="Bansal M."/>
            <person name="Baxter L."/>
            <person name="Beisel K.W."/>
            <person name="Bersano T."/>
            <person name="Bono H."/>
            <person name="Chalk A.M."/>
            <person name="Chiu K.P."/>
            <person name="Choudhary V."/>
            <person name="Christoffels A."/>
            <person name="Clutterbuck D.R."/>
            <person name="Crowe M.L."/>
            <person name="Dalla E."/>
            <person name="Dalrymple B.P."/>
            <person name="de Bono B."/>
            <person name="Della Gatta G."/>
            <person name="di Bernardo D."/>
            <person name="Down T."/>
            <person name="Engstrom P."/>
            <person name="Fagiolini M."/>
            <person name="Faulkner G."/>
            <person name="Fletcher C.F."/>
            <person name="Fukushima T."/>
            <person name="Furuno M."/>
            <person name="Futaki S."/>
            <person name="Gariboldi M."/>
            <person name="Georgii-Hemming P."/>
            <person name="Gingeras T.R."/>
            <person name="Gojobori T."/>
            <person name="Green R.E."/>
            <person name="Gustincich S."/>
            <person name="Harbers M."/>
            <person name="Hayashi Y."/>
            <person name="Hensch T.K."/>
            <person name="Hirokawa N."/>
            <person name="Hill D."/>
            <person name="Huminiecki L."/>
            <person name="Iacono M."/>
            <person name="Ikeo K."/>
            <person name="Iwama A."/>
            <person name="Ishikawa T."/>
            <person name="Jakt M."/>
            <person name="Kanapin A."/>
            <person name="Katoh M."/>
            <person name="Kawasawa Y."/>
            <person name="Kelso J."/>
            <person name="Kitamura H."/>
            <person name="Kitano H."/>
            <person name="Kollias G."/>
            <person name="Krishnan S.P."/>
            <person name="Kruger A."/>
            <person name="Kummerfeld S.K."/>
            <person name="Kurochkin I.V."/>
            <person name="Lareau L.F."/>
            <person name="Lazarevic D."/>
            <person name="Lipovich L."/>
            <person name="Liu J."/>
            <person name="Liuni S."/>
            <person name="McWilliam S."/>
            <person name="Madan Babu M."/>
            <person name="Madera M."/>
            <person name="Marchionni L."/>
            <person name="Matsuda H."/>
            <person name="Matsuzawa S."/>
            <person name="Miki H."/>
            <person name="Mignone F."/>
            <person name="Miyake S."/>
            <person name="Morris K."/>
            <person name="Mottagui-Tabar S."/>
            <person name="Mulder N."/>
            <person name="Nakano N."/>
            <person name="Nakauchi H."/>
            <person name="Ng P."/>
            <person name="Nilsson R."/>
            <person name="Nishiguchi S."/>
            <person name="Nishikawa S."/>
            <person name="Nori F."/>
            <person name="Ohara O."/>
            <person name="Okazaki Y."/>
            <person name="Orlando V."/>
            <person name="Pang K.C."/>
            <person name="Pavan W.J."/>
            <person name="Pavesi G."/>
            <person name="Pesole G."/>
            <person name="Petrovsky N."/>
            <person name="Piazza S."/>
            <person name="Reed J."/>
            <person name="Reid J.F."/>
            <person name="Ring B.Z."/>
            <person name="Ringwald M."/>
            <person name="Rost B."/>
            <person name="Ruan Y."/>
            <person name="Salzberg S.L."/>
            <person name="Sandelin A."/>
            <person name="Schneider C."/>
            <person name="Schoenbach C."/>
            <person name="Sekiguchi K."/>
            <person name="Semple C.A."/>
            <person name="Seno S."/>
            <person name="Sessa L."/>
            <person name="Sheng Y."/>
            <person name="Shibata Y."/>
            <person name="Shimada H."/>
            <person name="Shimada K."/>
            <person name="Silva D."/>
            <person name="Sinclair B."/>
            <person name="Sperling S."/>
            <person name="Stupka E."/>
            <person name="Sugiura K."/>
            <person name="Sultana R."/>
            <person name="Takenaka Y."/>
            <person name="Taki K."/>
            <person name="Tammoja K."/>
            <person name="Tan S.L."/>
            <person name="Tang S."/>
            <person name="Taylor M.S."/>
            <person name="Tegner J."/>
            <person name="Teichmann S.A."/>
            <person name="Ueda H.R."/>
            <person name="van Nimwegen E."/>
            <person name="Verardo R."/>
            <person name="Wei C.L."/>
            <person name="Yagi K."/>
            <person name="Yamanishi H."/>
            <person name="Zabarovsky E."/>
            <person name="Zhu S."/>
            <person name="Zimmer A."/>
            <person name="Hide W."/>
            <person name="Bult C."/>
            <person name="Grimmond S.M."/>
            <person name="Teasdale R.D."/>
            <person name="Liu E.T."/>
            <person name="Brusic V."/>
            <person name="Quackenbush J."/>
            <person name="Wahlestedt C."/>
            <person name="Mattick J.S."/>
            <person name="Hume D.A."/>
            <person name="Kai C."/>
            <person name="Sasaki D."/>
            <person name="Tomaru Y."/>
            <person name="Fukuda S."/>
            <person name="Kanamori-Katayama M."/>
            <person name="Suzuki M."/>
            <person name="Aoki J."/>
            <person name="Arakawa T."/>
            <person name="Iida J."/>
            <person name="Imamura K."/>
            <person name="Itoh M."/>
            <person name="Kato T."/>
            <person name="Kawaji H."/>
            <person name="Kawagashira N."/>
            <person name="Kawashima T."/>
            <person name="Kojima M."/>
            <person name="Kondo S."/>
            <person name="Konno H."/>
            <person name="Nakano K."/>
            <person name="Ninomiya N."/>
            <person name="Nishio T."/>
            <person name="Okada M."/>
            <person name="Plessy C."/>
            <person name="Shibata K."/>
            <person name="Shiraki T."/>
            <person name="Suzuki S."/>
            <person name="Tagami M."/>
            <person name="Waki K."/>
            <person name="Watahiki A."/>
            <person name="Okamura-Oho Y."/>
            <person name="Suzuki H."/>
            <person name="Kawai J."/>
            <person name="Hayashizaki Y."/>
        </authorList>
    </citation>
    <scope>NUCLEOTIDE SEQUENCE [LARGE SCALE MRNA]</scope>
    <source>
        <strain>C57BL/6J</strain>
        <tissue>Skin</tissue>
    </source>
</reference>
<reference key="2">
    <citation type="journal article" date="2004" name="Genome Res.">
        <title>The status, quality, and expansion of the NIH full-length cDNA project: the Mammalian Gene Collection (MGC).</title>
        <authorList>
            <consortium name="The MGC Project Team"/>
        </authorList>
    </citation>
    <scope>NUCLEOTIDE SEQUENCE [LARGE SCALE MRNA]</scope>
    <source>
        <tissue>Olfactory epithelium</tissue>
    </source>
</reference>
<organism>
    <name type="scientific">Mus musculus</name>
    <name type="common">Mouse</name>
    <dbReference type="NCBI Taxonomy" id="10090"/>
    <lineage>
        <taxon>Eukaryota</taxon>
        <taxon>Metazoa</taxon>
        <taxon>Chordata</taxon>
        <taxon>Craniata</taxon>
        <taxon>Vertebrata</taxon>
        <taxon>Euteleostomi</taxon>
        <taxon>Mammalia</taxon>
        <taxon>Eutheria</taxon>
        <taxon>Euarchontoglires</taxon>
        <taxon>Glires</taxon>
        <taxon>Rodentia</taxon>
        <taxon>Myomorpha</taxon>
        <taxon>Muroidea</taxon>
        <taxon>Muridae</taxon>
        <taxon>Murinae</taxon>
        <taxon>Mus</taxon>
        <taxon>Mus</taxon>
    </lineage>
</organism>
<feature type="signal peptide" evidence="2">
    <location>
        <begin position="1"/>
        <end position="32"/>
    </location>
</feature>
<feature type="chain" id="PRO_0000320649" description="Mesothelin-like protein">
    <location>
        <begin position="33"/>
        <end position="685"/>
    </location>
</feature>
<feature type="topological domain" description="Extracellular" evidence="2">
    <location>
        <begin position="33"/>
        <end position="627"/>
    </location>
</feature>
<feature type="transmembrane region" description="Helical" evidence="2">
    <location>
        <begin position="628"/>
        <end position="648"/>
    </location>
</feature>
<feature type="topological domain" description="Cytoplasmic" evidence="2">
    <location>
        <begin position="649"/>
        <end position="685"/>
    </location>
</feature>
<feature type="region of interest" description="Disordered" evidence="3">
    <location>
        <begin position="603"/>
        <end position="624"/>
    </location>
</feature>
<feature type="glycosylation site" description="N-linked (GlcNAc...) asparagine" evidence="2">
    <location>
        <position position="315"/>
    </location>
</feature>
<feature type="glycosylation site" description="N-linked (GlcNAc...) asparagine" evidence="2">
    <location>
        <position position="400"/>
    </location>
</feature>
<gene>
    <name type="primary">Mslnl</name>
    <name type="synonym">Mpfl</name>
</gene>
<dbReference type="EMBL" id="AK028891">
    <property type="protein sequence ID" value="BAC26178.1"/>
    <property type="molecule type" value="mRNA"/>
</dbReference>
<dbReference type="EMBL" id="BC052484">
    <property type="protein sequence ID" value="AAH52484.1"/>
    <property type="molecule type" value="mRNA"/>
</dbReference>
<dbReference type="CCDS" id="CCDS28525.1"/>
<dbReference type="RefSeq" id="NP_808490.1">
    <property type="nucleotide sequence ID" value="NM_177822.3"/>
</dbReference>
<dbReference type="RefSeq" id="XP_006524491.1">
    <property type="nucleotide sequence ID" value="XM_006524428.4"/>
</dbReference>
<dbReference type="SMR" id="Q8C160"/>
<dbReference type="FunCoup" id="Q8C160">
    <property type="interactions" value="27"/>
</dbReference>
<dbReference type="STRING" id="10090.ENSMUSP00000049020"/>
<dbReference type="GlyCosmos" id="Q8C160">
    <property type="glycosylation" value="2 sites, No reported glycans"/>
</dbReference>
<dbReference type="GlyGen" id="Q8C160">
    <property type="glycosylation" value="3 sites, 1 N-linked glycan (1 site)"/>
</dbReference>
<dbReference type="iPTMnet" id="Q8C160"/>
<dbReference type="PhosphoSitePlus" id="Q8C160"/>
<dbReference type="PaxDb" id="10090-ENSMUSP00000049020"/>
<dbReference type="ProteomicsDB" id="295596"/>
<dbReference type="Antibodypedia" id="82376">
    <property type="antibodies" value="1 antibodies from 1 providers"/>
</dbReference>
<dbReference type="DNASU" id="328783"/>
<dbReference type="Ensembl" id="ENSMUST00000047098.7">
    <property type="protein sequence ID" value="ENSMUSP00000049020.6"/>
    <property type="gene ID" value="ENSMUSG00000041062.8"/>
</dbReference>
<dbReference type="GeneID" id="328783"/>
<dbReference type="KEGG" id="mmu:328783"/>
<dbReference type="UCSC" id="uc008bbn.1">
    <property type="organism name" value="mouse"/>
</dbReference>
<dbReference type="AGR" id="MGI:3607710"/>
<dbReference type="CTD" id="401827"/>
<dbReference type="MGI" id="MGI:3607710">
    <property type="gene designation" value="Mslnl"/>
</dbReference>
<dbReference type="VEuPathDB" id="HostDB:ENSMUSG00000041062"/>
<dbReference type="eggNOG" id="ENOG502QRX1">
    <property type="taxonomic scope" value="Eukaryota"/>
</dbReference>
<dbReference type="GeneTree" id="ENSGT00950000182957"/>
<dbReference type="HOGENOM" id="CLU_014552_2_0_1"/>
<dbReference type="InParanoid" id="Q8C160"/>
<dbReference type="OMA" id="CRAFTHR"/>
<dbReference type="OrthoDB" id="9909579at2759"/>
<dbReference type="PhylomeDB" id="Q8C160"/>
<dbReference type="TreeFam" id="TF331713"/>
<dbReference type="BioGRID-ORCS" id="328783">
    <property type="hits" value="1 hit in 76 CRISPR screens"/>
</dbReference>
<dbReference type="PRO" id="PR:Q8C160"/>
<dbReference type="Proteomes" id="UP000000589">
    <property type="component" value="Chromosome 17"/>
</dbReference>
<dbReference type="RNAct" id="Q8C160">
    <property type="molecule type" value="protein"/>
</dbReference>
<dbReference type="Bgee" id="ENSMUSG00000041062">
    <property type="expression patterns" value="Expressed in blastoderm cell in morula and 20 other cell types or tissues"/>
</dbReference>
<dbReference type="GO" id="GO:0016020">
    <property type="term" value="C:membrane"/>
    <property type="evidence" value="ECO:0007669"/>
    <property type="project" value="UniProtKB-SubCell"/>
</dbReference>
<dbReference type="GO" id="GO:0007155">
    <property type="term" value="P:cell adhesion"/>
    <property type="evidence" value="ECO:0007669"/>
    <property type="project" value="UniProtKB-KW"/>
</dbReference>
<dbReference type="InterPro" id="IPR010335">
    <property type="entry name" value="Mesothelin"/>
</dbReference>
<dbReference type="InterPro" id="IPR026664">
    <property type="entry name" value="Stereocilin-rel"/>
</dbReference>
<dbReference type="PANTHER" id="PTHR23412:SF15">
    <property type="entry name" value="MESOTHELIN-LIKE PROTEIN"/>
    <property type="match status" value="1"/>
</dbReference>
<dbReference type="PANTHER" id="PTHR23412">
    <property type="entry name" value="STEREOCILIN RELATED"/>
    <property type="match status" value="1"/>
</dbReference>
<dbReference type="Pfam" id="PF06060">
    <property type="entry name" value="Mesothelin"/>
    <property type="match status" value="1"/>
</dbReference>
<proteinExistence type="evidence at transcript level"/>